<reference key="1">
    <citation type="journal article" date="1991" name="Proc. Natl. Acad. Sci. U.S.A.">
        <title>Primary structures of the precursor and mature forms of stearoyl-acyl carrier protein desaturase from safflower embryos and requirement of ferredoxin for enzyme activity.</title>
        <authorList>
            <person name="Thompson G.A."/>
            <person name="Scherer D.E."/>
            <person name="Foxall-Van Aken S."/>
            <person name="Kenny J.W."/>
            <person name="Young H.L."/>
            <person name="Shintani D.K."/>
            <person name="Kridl J.C."/>
            <person name="Knauf V.C."/>
        </authorList>
    </citation>
    <scope>NUCLEOTIDE SEQUENCE [MRNA]</scope>
    <scope>PROTEIN SEQUENCE OF 34-94; 99-151; 156-169; 181-206; 214-230; 248-304; 309-312 AND 315-396</scope>
    <source>
        <tissue>Seed</tissue>
    </source>
</reference>
<comment type="function">
    <text evidence="1">Converts stearoyl-ACP to oleoyl-ACP by introduction of a cis double bond between carbons 9 and 10 of the acyl chain.</text>
</comment>
<comment type="catalytic activity">
    <reaction evidence="1">
        <text>octadecanoyl-[ACP] + 2 reduced [2Fe-2S]-[ferredoxin] + O2 + 2 H(+) = (9Z)-octadecenoyl-[ACP] + 2 oxidized [2Fe-2S]-[ferredoxin] + 2 H2O</text>
        <dbReference type="Rhea" id="RHEA:11776"/>
        <dbReference type="Rhea" id="RHEA-COMP:9656"/>
        <dbReference type="Rhea" id="RHEA-COMP:9924"/>
        <dbReference type="Rhea" id="RHEA-COMP:10000"/>
        <dbReference type="Rhea" id="RHEA-COMP:10001"/>
        <dbReference type="ChEBI" id="CHEBI:15377"/>
        <dbReference type="ChEBI" id="CHEBI:15378"/>
        <dbReference type="ChEBI" id="CHEBI:15379"/>
        <dbReference type="ChEBI" id="CHEBI:33737"/>
        <dbReference type="ChEBI" id="CHEBI:33738"/>
        <dbReference type="ChEBI" id="CHEBI:78495"/>
        <dbReference type="ChEBI" id="CHEBI:78783"/>
        <dbReference type="EC" id="1.14.19.2"/>
    </reaction>
</comment>
<comment type="cofactor">
    <cofactor evidence="1">
        <name>Fe(2+)</name>
        <dbReference type="ChEBI" id="CHEBI:29033"/>
    </cofactor>
    <text evidence="1">Binds 2 Fe(2+) ions per subunit.</text>
</comment>
<comment type="pathway">
    <text>Lipid metabolism; fatty acid metabolism.</text>
</comment>
<comment type="subunit">
    <text>Homodimer.</text>
</comment>
<comment type="subcellular location">
    <subcellularLocation>
        <location>Plastid</location>
        <location>Chloroplast</location>
    </subcellularLocation>
    <subcellularLocation>
        <location>Plastid</location>
    </subcellularLocation>
    <text>In green tissue, found in chloroplasts. In non-photosynthetic tissue, found in plastids.</text>
</comment>
<comment type="PTM">
    <text>Most of the N-terminus is blocked.</text>
</comment>
<comment type="similarity">
    <text evidence="3">Belongs to the fatty acid desaturase type 2 family.</text>
</comment>
<feature type="transit peptide" description="Chloroplast" evidence="2">
    <location>
        <begin position="1"/>
        <end position="33"/>
    </location>
</feature>
<feature type="chain" id="PRO_0000007129" description="Stearoyl-[acyl-carrier-protein] 9-desaturase, chloroplastic">
    <location>
        <begin position="34"/>
        <end position="396"/>
    </location>
</feature>
<feature type="binding site" evidence="1">
    <location>
        <position position="138"/>
    </location>
    <ligand>
        <name>Fe cation</name>
        <dbReference type="ChEBI" id="CHEBI:24875"/>
        <label>1</label>
    </ligand>
</feature>
<feature type="binding site" evidence="1">
    <location>
        <position position="176"/>
    </location>
    <ligand>
        <name>Fe cation</name>
        <dbReference type="ChEBI" id="CHEBI:24875"/>
        <label>1</label>
    </ligand>
</feature>
<feature type="binding site" evidence="1">
    <location>
        <position position="176"/>
    </location>
    <ligand>
        <name>Fe cation</name>
        <dbReference type="ChEBI" id="CHEBI:24875"/>
        <label>2</label>
    </ligand>
</feature>
<feature type="binding site" evidence="1">
    <location>
        <position position="179"/>
    </location>
    <ligand>
        <name>Fe cation</name>
        <dbReference type="ChEBI" id="CHEBI:24875"/>
        <label>1</label>
    </ligand>
</feature>
<feature type="binding site" evidence="1">
    <location>
        <position position="229"/>
    </location>
    <ligand>
        <name>Fe cation</name>
        <dbReference type="ChEBI" id="CHEBI:24875"/>
        <label>2</label>
    </ligand>
</feature>
<feature type="binding site" evidence="1">
    <location>
        <position position="262"/>
    </location>
    <ligand>
        <name>Fe cation</name>
        <dbReference type="ChEBI" id="CHEBI:24875"/>
        <label>1</label>
    </ligand>
</feature>
<feature type="binding site" evidence="1">
    <location>
        <position position="262"/>
    </location>
    <ligand>
        <name>Fe cation</name>
        <dbReference type="ChEBI" id="CHEBI:24875"/>
        <label>2</label>
    </ligand>
</feature>
<feature type="binding site" evidence="1">
    <location>
        <position position="265"/>
    </location>
    <ligand>
        <name>Fe cation</name>
        <dbReference type="ChEBI" id="CHEBI:24875"/>
        <label>2</label>
    </ligand>
</feature>
<feature type="modified residue" description="Blocked amino end (Ala); partial">
    <location>
        <position position="34"/>
    </location>
</feature>
<organism>
    <name type="scientific">Carthamus tinctorius</name>
    <name type="common">Safflower</name>
    <dbReference type="NCBI Taxonomy" id="4222"/>
    <lineage>
        <taxon>Eukaryota</taxon>
        <taxon>Viridiplantae</taxon>
        <taxon>Streptophyta</taxon>
        <taxon>Embryophyta</taxon>
        <taxon>Tracheophyta</taxon>
        <taxon>Spermatophyta</taxon>
        <taxon>Magnoliopsida</taxon>
        <taxon>eudicotyledons</taxon>
        <taxon>Gunneridae</taxon>
        <taxon>Pentapetalae</taxon>
        <taxon>asterids</taxon>
        <taxon>campanulids</taxon>
        <taxon>Asterales</taxon>
        <taxon>Asteraceae</taxon>
        <taxon>Carduoideae</taxon>
        <taxon>Cardueae</taxon>
        <taxon>Centaureinae</taxon>
        <taxon>Carthamus</taxon>
    </lineage>
</organism>
<keyword id="KW-0150">Chloroplast</keyword>
<keyword id="KW-0903">Direct protein sequencing</keyword>
<keyword id="KW-0275">Fatty acid biosynthesis</keyword>
<keyword id="KW-0276">Fatty acid metabolism</keyword>
<keyword id="KW-0408">Iron</keyword>
<keyword id="KW-0444">Lipid biosynthesis</keyword>
<keyword id="KW-0443">Lipid metabolism</keyword>
<keyword id="KW-0479">Metal-binding</keyword>
<keyword id="KW-0560">Oxidoreductase</keyword>
<keyword id="KW-0934">Plastid</keyword>
<keyword id="KW-0809">Transit peptide</keyword>
<name>STAD_CARTI</name>
<proteinExistence type="evidence at protein level"/>
<accession>P22243</accession>
<evidence type="ECO:0000250" key="1">
    <source>
        <dbReference type="UniProtKB" id="P22337"/>
    </source>
</evidence>
<evidence type="ECO:0000269" key="2">
    <source>
    </source>
</evidence>
<evidence type="ECO:0000305" key="3"/>
<sequence>MALRITPVTLQSERYRSFSFPKKANLRSPKFAMASTLGSSTPKVDNAKKPFQPPREVHVQVTHSMPPQKIEIFKSIEGWAEQNILVHLKPVEKCWQAQDFLPDPASEGFDEQVKELRARAKEIPDDYFVVLVGDMITEEALPTYQTMLNTLDGVRDETGASLTPWAVWTRAWTAEENRHGDLLHTYLYLSGRVDMRQIQKTIQYLIGSGMDPRTENSPYLGFIYTSFQERATFVSHGNTARHAKDHGDVKLAQICGTIASDEKRHETAYTKIVEKLFEIDPDGTVLAFADMMRKKISMPAHLMYDGRDDNLFEHFSAVAQRLGVYTAKDYADILEFLVGRWKVADLTGLSGEGRKAQDYVCGLPPRIRRLEERAQGRAKEGPVVPFSWIFDRQVKL</sequence>
<dbReference type="EC" id="1.14.19.2" evidence="1"/>
<dbReference type="EMBL" id="M61109">
    <property type="protein sequence ID" value="AAA33021.1"/>
    <property type="molecule type" value="mRNA"/>
</dbReference>
<dbReference type="PIR" id="A39173">
    <property type="entry name" value="A39173"/>
</dbReference>
<dbReference type="SMR" id="P22243"/>
<dbReference type="BRENDA" id="1.14.19.2">
    <property type="organism ID" value="1196"/>
</dbReference>
<dbReference type="UniPathway" id="UPA00199"/>
<dbReference type="GO" id="GO:0009570">
    <property type="term" value="C:chloroplast stroma"/>
    <property type="evidence" value="ECO:0007669"/>
    <property type="project" value="TreeGrafter"/>
</dbReference>
<dbReference type="GO" id="GO:0046872">
    <property type="term" value="F:metal ion binding"/>
    <property type="evidence" value="ECO:0007669"/>
    <property type="project" value="UniProtKB-KW"/>
</dbReference>
<dbReference type="GO" id="GO:0045300">
    <property type="term" value="F:stearoyl-[ACP] desaturase activity"/>
    <property type="evidence" value="ECO:0007669"/>
    <property type="project" value="UniProtKB-EC"/>
</dbReference>
<dbReference type="GO" id="GO:0006633">
    <property type="term" value="P:fatty acid biosynthetic process"/>
    <property type="evidence" value="ECO:0007669"/>
    <property type="project" value="UniProtKB-KW"/>
</dbReference>
<dbReference type="CDD" id="cd01050">
    <property type="entry name" value="Acyl_ACP_Desat"/>
    <property type="match status" value="1"/>
</dbReference>
<dbReference type="FunFam" id="1.10.620.20:FF:000002">
    <property type="entry name" value="Stearoyl-[acyl-carrier-protein] 9-desaturase, chloroplastic"/>
    <property type="match status" value="1"/>
</dbReference>
<dbReference type="Gene3D" id="1.10.620.20">
    <property type="entry name" value="Ribonucleotide Reductase, subunit A"/>
    <property type="match status" value="1"/>
</dbReference>
<dbReference type="InterPro" id="IPR005803">
    <property type="entry name" value="FADS-2_CS"/>
</dbReference>
<dbReference type="InterPro" id="IPR005067">
    <property type="entry name" value="Fatty_acid_desaturase-2"/>
</dbReference>
<dbReference type="InterPro" id="IPR009078">
    <property type="entry name" value="Ferritin-like_SF"/>
</dbReference>
<dbReference type="InterPro" id="IPR012348">
    <property type="entry name" value="RNR-like"/>
</dbReference>
<dbReference type="PANTHER" id="PTHR31155">
    <property type="entry name" value="ACYL- ACYL-CARRIER-PROTEIN DESATURASE-RELATED"/>
    <property type="match status" value="1"/>
</dbReference>
<dbReference type="PANTHER" id="PTHR31155:SF9">
    <property type="entry name" value="STEAROYL-[ACYL-CARRIER-PROTEIN] 9-DESATURASE 7, CHLOROPLASTIC"/>
    <property type="match status" value="1"/>
</dbReference>
<dbReference type="Pfam" id="PF03405">
    <property type="entry name" value="FA_desaturase_2"/>
    <property type="match status" value="1"/>
</dbReference>
<dbReference type="PIRSF" id="PIRSF000346">
    <property type="entry name" value="Dlt9_acylACP_des"/>
    <property type="match status" value="1"/>
</dbReference>
<dbReference type="SUPFAM" id="SSF47240">
    <property type="entry name" value="Ferritin-like"/>
    <property type="match status" value="1"/>
</dbReference>
<dbReference type="PROSITE" id="PS00574">
    <property type="entry name" value="FATTY_ACID_DESATUR_2"/>
    <property type="match status" value="1"/>
</dbReference>
<protein>
    <recommendedName>
        <fullName>Stearoyl-[acyl-carrier-protein] 9-desaturase, chloroplastic</fullName>
        <shortName>Stearoyl-ACP desaturase</shortName>
        <ecNumber evidence="1">1.14.19.2</ecNumber>
    </recommendedName>
    <alternativeName>
        <fullName>Acyl-[acyl-carrier-protein] desaturase</fullName>
    </alternativeName>
</protein>